<proteinExistence type="inferred from homology"/>
<keyword id="KW-1185">Reference proteome</keyword>
<dbReference type="EMBL" id="BX950851">
    <property type="protein sequence ID" value="CAG76947.1"/>
    <property type="molecule type" value="Genomic_DNA"/>
</dbReference>
<dbReference type="RefSeq" id="WP_005969553.1">
    <property type="nucleotide sequence ID" value="NC_004547.2"/>
</dbReference>
<dbReference type="SMR" id="Q6CZV1"/>
<dbReference type="STRING" id="218491.ECA4050"/>
<dbReference type="KEGG" id="eca:ECA4050"/>
<dbReference type="PATRIC" id="fig|218491.5.peg.4116"/>
<dbReference type="eggNOG" id="COG2900">
    <property type="taxonomic scope" value="Bacteria"/>
</dbReference>
<dbReference type="HOGENOM" id="CLU_180796_4_2_6"/>
<dbReference type="OrthoDB" id="5771733at2"/>
<dbReference type="Proteomes" id="UP000007966">
    <property type="component" value="Chromosome"/>
</dbReference>
<dbReference type="Gene3D" id="1.20.5.300">
    <property type="match status" value="1"/>
</dbReference>
<dbReference type="HAMAP" id="MF_00715">
    <property type="entry name" value="SlyX"/>
    <property type="match status" value="1"/>
</dbReference>
<dbReference type="InterPro" id="IPR007236">
    <property type="entry name" value="SlyX"/>
</dbReference>
<dbReference type="NCBIfam" id="NF002750">
    <property type="entry name" value="PRK02793.1"/>
    <property type="match status" value="1"/>
</dbReference>
<dbReference type="PANTHER" id="PTHR36508">
    <property type="entry name" value="PROTEIN SLYX"/>
    <property type="match status" value="1"/>
</dbReference>
<dbReference type="PANTHER" id="PTHR36508:SF1">
    <property type="entry name" value="PROTEIN SLYX"/>
    <property type="match status" value="1"/>
</dbReference>
<dbReference type="Pfam" id="PF04102">
    <property type="entry name" value="SlyX"/>
    <property type="match status" value="1"/>
</dbReference>
<comment type="similarity">
    <text evidence="1">Belongs to the SlyX family.</text>
</comment>
<feature type="chain" id="PRO_0000227065" description="Protein SlyX">
    <location>
        <begin position="1"/>
        <end position="72"/>
    </location>
</feature>
<feature type="region of interest" description="Disordered" evidence="2">
    <location>
        <begin position="53"/>
        <end position="72"/>
    </location>
</feature>
<feature type="compositionally biased region" description="Polar residues" evidence="2">
    <location>
        <begin position="54"/>
        <end position="66"/>
    </location>
</feature>
<organism>
    <name type="scientific">Pectobacterium atrosepticum (strain SCRI 1043 / ATCC BAA-672)</name>
    <name type="common">Erwinia carotovora subsp. atroseptica</name>
    <dbReference type="NCBI Taxonomy" id="218491"/>
    <lineage>
        <taxon>Bacteria</taxon>
        <taxon>Pseudomonadati</taxon>
        <taxon>Pseudomonadota</taxon>
        <taxon>Gammaproteobacteria</taxon>
        <taxon>Enterobacterales</taxon>
        <taxon>Pectobacteriaceae</taxon>
        <taxon>Pectobacterium</taxon>
    </lineage>
</organism>
<gene>
    <name evidence="1" type="primary">slyX</name>
    <name type="ordered locus">ECA4050</name>
</gene>
<name>SLYX_PECAS</name>
<protein>
    <recommendedName>
        <fullName evidence="1">Protein SlyX</fullName>
    </recommendedName>
</protein>
<sequence length="72" mass="8519">MSPSALEERLEQLESRQAFQELTIEDLNQTVIQHEREISRLREHVRLLTDRLRNQQTSLVAPQSEETPPPHY</sequence>
<evidence type="ECO:0000255" key="1">
    <source>
        <dbReference type="HAMAP-Rule" id="MF_00715"/>
    </source>
</evidence>
<evidence type="ECO:0000256" key="2">
    <source>
        <dbReference type="SAM" id="MobiDB-lite"/>
    </source>
</evidence>
<accession>Q6CZV1</accession>
<reference key="1">
    <citation type="journal article" date="2004" name="Proc. Natl. Acad. Sci. U.S.A.">
        <title>Genome sequence of the enterobacterial phytopathogen Erwinia carotovora subsp. atroseptica and characterization of virulence factors.</title>
        <authorList>
            <person name="Bell K.S."/>
            <person name="Sebaihia M."/>
            <person name="Pritchard L."/>
            <person name="Holden M.T.G."/>
            <person name="Hyman L.J."/>
            <person name="Holeva M.C."/>
            <person name="Thomson N.R."/>
            <person name="Bentley S.D."/>
            <person name="Churcher L.J.C."/>
            <person name="Mungall K."/>
            <person name="Atkin R."/>
            <person name="Bason N."/>
            <person name="Brooks K."/>
            <person name="Chillingworth T."/>
            <person name="Clark K."/>
            <person name="Doggett J."/>
            <person name="Fraser A."/>
            <person name="Hance Z."/>
            <person name="Hauser H."/>
            <person name="Jagels K."/>
            <person name="Moule S."/>
            <person name="Norbertczak H."/>
            <person name="Ormond D."/>
            <person name="Price C."/>
            <person name="Quail M.A."/>
            <person name="Sanders M."/>
            <person name="Walker D."/>
            <person name="Whitehead S."/>
            <person name="Salmond G.P.C."/>
            <person name="Birch P.R.J."/>
            <person name="Parkhill J."/>
            <person name="Toth I.K."/>
        </authorList>
    </citation>
    <scope>NUCLEOTIDE SEQUENCE [LARGE SCALE GENOMIC DNA]</scope>
    <source>
        <strain>SCRI 1043 / ATCC BAA-672</strain>
    </source>
</reference>